<organism>
    <name type="scientific">Plasmopara viticola</name>
    <name type="common">Downy mildew of grapevine</name>
    <name type="synonym">Botrytis viticola</name>
    <dbReference type="NCBI Taxonomy" id="143451"/>
    <lineage>
        <taxon>Eukaryota</taxon>
        <taxon>Sar</taxon>
        <taxon>Stramenopiles</taxon>
        <taxon>Oomycota</taxon>
        <taxon>Peronosporales</taxon>
        <taxon>Peronosporaceae</taxon>
        <taxon>Plasmopara</taxon>
    </lineage>
</organism>
<sequence>MRVLNFVLTTTVVLLTSSEGIASSPQVRHIKPNVAIDHLSIRSLRATENPGSDESRLNEKDTGFDPDGSSSKEDEDIGEPTFWEKVRFRYWKTMGKTPGDLRKEYFEGMDEAVIKNNPNYKLVQQYEVYYDEKSSE</sequence>
<reference key="1">
    <citation type="journal article" date="2016" name="Front. Microbiol.">
        <title>Studying the mechanism of Plasmopara viticola RxLR effectors on suppressing plant immunity.</title>
        <authorList>
            <person name="Xiang J."/>
            <person name="Li X."/>
            <person name="Wu J."/>
            <person name="Yin L."/>
            <person name="Zhang Y."/>
            <person name="Lu J."/>
        </authorList>
    </citation>
    <scope>NUCLEOTIDE SEQUENCE [MRNA]</scope>
    <scope>INDUCTION</scope>
    <scope>FUNCTION</scope>
    <scope>SUBCELLULAR LOCATION</scope>
    <source>
        <strain>ZJ-1-1</strain>
    </source>
</reference>
<reference key="2">
    <citation type="journal article" date="2015" name="Physiol. Mol. Plant Pathol.">
        <title>Characterization of the secretome of Plasmopara viticola by de novo transcriptome analysis.</title>
        <authorList>
            <person name="Yin L."/>
            <person name="Li X."/>
            <person name="Xiang J."/>
            <person name="Qu J."/>
            <person name="Zhang Y."/>
            <person name="Dry I.B."/>
            <person name="Lu J."/>
        </authorList>
    </citation>
    <scope>IDENTIFICATION</scope>
    <scope>INDUCTION</scope>
    <scope>FUNCTION</scope>
    <scope>DOMAIN</scope>
</reference>
<comment type="function">
    <text evidence="3 4">Effector that acts as a broad suppressor of cell death to interrupt plant immunity. Inhibits cell death induced by cell death-inducing proteins, including the PAMP elicitor INF1 from P.infestans.</text>
</comment>
<comment type="subcellular location">
    <subcellularLocation>
        <location evidence="3">Secreted</location>
    </subcellularLocation>
    <subcellularLocation>
        <location evidence="3">Host cytoplasm</location>
    </subcellularLocation>
    <subcellularLocation>
        <location evidence="3">Host nucleus</location>
    </subcellularLocation>
</comment>
<comment type="induction">
    <text evidence="3 4">Expression is up-regulated at the earlier infection stages.</text>
</comment>
<comment type="domain">
    <text evidence="7">The RxLR-dEER motif acts to carry the protein into the host cell cytoplasm through binding to cell surface phosphatidylinositol-3-phosphate.</text>
</comment>
<comment type="similarity">
    <text evidence="6">Belongs to the RxLR effector family.</text>
</comment>
<accession>A0A172M421</accession>
<protein>
    <recommendedName>
        <fullName evidence="5">Secreted RxLR effector protein 10</fullName>
    </recommendedName>
</protein>
<dbReference type="EMBL" id="KX010950">
    <property type="protein sequence ID" value="ANC73370.1"/>
    <property type="molecule type" value="mRNA"/>
</dbReference>
<dbReference type="SMR" id="A0A172M421"/>
<dbReference type="GO" id="GO:0005576">
    <property type="term" value="C:extracellular region"/>
    <property type="evidence" value="ECO:0007669"/>
    <property type="project" value="UniProtKB-SubCell"/>
</dbReference>
<dbReference type="GO" id="GO:0030430">
    <property type="term" value="C:host cell cytoplasm"/>
    <property type="evidence" value="ECO:0007669"/>
    <property type="project" value="UniProtKB-SubCell"/>
</dbReference>
<dbReference type="GO" id="GO:0042025">
    <property type="term" value="C:host cell nucleus"/>
    <property type="evidence" value="ECO:0007669"/>
    <property type="project" value="UniProtKB-SubCell"/>
</dbReference>
<gene>
    <name evidence="5" type="primary">RxLR10</name>
</gene>
<evidence type="ECO:0000255" key="1"/>
<evidence type="ECO:0000256" key="2">
    <source>
        <dbReference type="SAM" id="MobiDB-lite"/>
    </source>
</evidence>
<evidence type="ECO:0000269" key="3">
    <source>
    </source>
</evidence>
<evidence type="ECO:0000269" key="4">
    <source ref="2"/>
</evidence>
<evidence type="ECO:0000303" key="5">
    <source ref="2"/>
</evidence>
<evidence type="ECO:0000305" key="6"/>
<evidence type="ECO:0000305" key="7">
    <source ref="2"/>
</evidence>
<feature type="signal peptide" evidence="1">
    <location>
        <begin position="1"/>
        <end position="22"/>
    </location>
</feature>
<feature type="chain" id="PRO_5007999404" description="Secreted RxLR effector protein 10">
    <location>
        <begin position="23"/>
        <end position="136"/>
    </location>
</feature>
<feature type="region of interest" description="Disordered" evidence="2">
    <location>
        <begin position="42"/>
        <end position="78"/>
    </location>
</feature>
<feature type="short sequence motif" description="RxLR-dEER" evidence="7">
    <location>
        <begin position="42"/>
        <end position="56"/>
    </location>
</feature>
<feature type="compositionally biased region" description="Basic and acidic residues" evidence="2">
    <location>
        <begin position="53"/>
        <end position="63"/>
    </location>
</feature>
<proteinExistence type="evidence at transcript level"/>
<name>RLR10_PLAVT</name>
<keyword id="KW-1035">Host cytoplasm</keyword>
<keyword id="KW-1048">Host nucleus</keyword>
<keyword id="KW-0964">Secreted</keyword>
<keyword id="KW-0732">Signal</keyword>
<keyword id="KW-0843">Virulence</keyword>